<reference key="1">
    <citation type="journal article" date="2001" name="Nature">
        <title>Genome sequence of enterohaemorrhagic Escherichia coli O157:H7.</title>
        <authorList>
            <person name="Perna N.T."/>
            <person name="Plunkett G. III"/>
            <person name="Burland V."/>
            <person name="Mau B."/>
            <person name="Glasner J.D."/>
            <person name="Rose D.J."/>
            <person name="Mayhew G.F."/>
            <person name="Evans P.S."/>
            <person name="Gregor J."/>
            <person name="Kirkpatrick H.A."/>
            <person name="Posfai G."/>
            <person name="Hackett J."/>
            <person name="Klink S."/>
            <person name="Boutin A."/>
            <person name="Shao Y."/>
            <person name="Miller L."/>
            <person name="Grotbeck E.J."/>
            <person name="Davis N.W."/>
            <person name="Lim A."/>
            <person name="Dimalanta E.T."/>
            <person name="Potamousis K."/>
            <person name="Apodaca J."/>
            <person name="Anantharaman T.S."/>
            <person name="Lin J."/>
            <person name="Yen G."/>
            <person name="Schwartz D.C."/>
            <person name="Welch R.A."/>
            <person name="Blattner F.R."/>
        </authorList>
    </citation>
    <scope>NUCLEOTIDE SEQUENCE [LARGE SCALE GENOMIC DNA]</scope>
    <source>
        <strain>O157:H7 / EDL933 / ATCC 700927 / EHEC</strain>
    </source>
</reference>
<reference key="2">
    <citation type="journal article" date="2001" name="DNA Res.">
        <title>Complete genome sequence of enterohemorrhagic Escherichia coli O157:H7 and genomic comparison with a laboratory strain K-12.</title>
        <authorList>
            <person name="Hayashi T."/>
            <person name="Makino K."/>
            <person name="Ohnishi M."/>
            <person name="Kurokawa K."/>
            <person name="Ishii K."/>
            <person name="Yokoyama K."/>
            <person name="Han C.-G."/>
            <person name="Ohtsubo E."/>
            <person name="Nakayama K."/>
            <person name="Murata T."/>
            <person name="Tanaka M."/>
            <person name="Tobe T."/>
            <person name="Iida T."/>
            <person name="Takami H."/>
            <person name="Honda T."/>
            <person name="Sasakawa C."/>
            <person name="Ogasawara N."/>
            <person name="Yasunaga T."/>
            <person name="Kuhara S."/>
            <person name="Shiba T."/>
            <person name="Hattori M."/>
            <person name="Shinagawa H."/>
        </authorList>
    </citation>
    <scope>NUCLEOTIDE SEQUENCE [LARGE SCALE GENOMIC DNA]</scope>
    <source>
        <strain>O157:H7 / Sakai / RIMD 0509952 / EHEC</strain>
    </source>
</reference>
<protein>
    <recommendedName>
        <fullName evidence="2">HTH-type transcriptional repressor PurR</fullName>
    </recommendedName>
    <alternativeName>
        <fullName evidence="2">Pur regulon repressor</fullName>
    </alternativeName>
    <alternativeName>
        <fullName evidence="2">Purine nucleotide synthesis repressor</fullName>
    </alternativeName>
</protein>
<comment type="function">
    <text evidence="2">Is the main repressor of the genes involved in the de novo synthesis of purine nucleotides, regulating purB, purC, purEK, purF, purHD, purL, purMN and guaBA expression. PurR is allosterically activated to bind its cognate DNA by binding the purine corepressors, hypoxanthine or guanine, thereby effecting transcription repression.</text>
</comment>
<comment type="pathway">
    <text>Purine metabolism; purine nucleotide biosynthesis [regulation].</text>
</comment>
<comment type="subunit">
    <text evidence="2">Homodimer.</text>
</comment>
<comment type="domain">
    <text evidence="2">Consists of two structural and functional domains: an N-terminal DNA-binding domain, approximately the first 60 residues, and a larger C-terminal domain, approximately 280 residues, which imparts the function of corepressor binding and oligomerization.</text>
</comment>
<sequence>MATIKDVAKRANVSTTTVSHVINKTRFVAEETRNAVWAAIKELHYSPSAVARSLKVNHTKSIGLLATSSEAAYFAEIIEAVEKNCFQKGYTLILGNAWNNLEKQRAYLSMMAQKRVDGLLVMCSEYPEPLLAMLEEYRHIPMVVMDWGEAKADFTDAVIDNAFEGGYMAGRYLIERGHREIGVIPGPLERNTGAGRLAGFMKAMEEAMIKVPESWIVQGDFEPESGYRAMQQILSQPHRPTAVFCGGDIMAMGALCAADEMGLRVPQDVSLIGYDNVRNARYFTPALTTIHQPKDSLGETAFNMLLDRIVNKREEPQSIEVHPRLIERRSVADGPFRDYRR</sequence>
<name>PURR_ECO57</name>
<gene>
    <name evidence="2" type="primary">purR</name>
    <name type="ordered locus">Z2681</name>
    <name type="ordered locus">ECs2367</name>
</gene>
<accession>P0ACP8</accession>
<accession>P15039</accession>
<accession>Q83RB1</accession>
<feature type="initiator methionine" description="Removed" evidence="1">
    <location>
        <position position="1"/>
    </location>
</feature>
<feature type="chain" id="PRO_0000107977" description="HTH-type transcriptional repressor PurR">
    <location>
        <begin position="2"/>
        <end position="341"/>
    </location>
</feature>
<feature type="domain" description="HTH lacI-type" evidence="2">
    <location>
        <begin position="2"/>
        <end position="56"/>
    </location>
</feature>
<feature type="DNA-binding region" description="H-T-H motif" evidence="2">
    <location>
        <begin position="4"/>
        <end position="23"/>
    </location>
</feature>
<feature type="DNA-binding region" evidence="2">
    <location>
        <begin position="48"/>
        <end position="56"/>
    </location>
</feature>
<feature type="binding site" evidence="2">
    <location>
        <position position="73"/>
    </location>
    <ligand>
        <name>hypoxanthine</name>
        <dbReference type="ChEBI" id="CHEBI:17368"/>
    </ligand>
</feature>
<feature type="binding site" evidence="2">
    <location>
        <position position="190"/>
    </location>
    <ligand>
        <name>hypoxanthine</name>
        <dbReference type="ChEBI" id="CHEBI:17368"/>
    </ligand>
</feature>
<feature type="binding site" evidence="2">
    <location>
        <position position="192"/>
    </location>
    <ligand>
        <name>hypoxanthine</name>
        <dbReference type="ChEBI" id="CHEBI:17368"/>
    </ligand>
</feature>
<feature type="binding site" evidence="2">
    <location>
        <position position="221"/>
    </location>
    <ligand>
        <name>hypoxanthine</name>
        <dbReference type="ChEBI" id="CHEBI:17368"/>
    </ligand>
</feature>
<feature type="binding site" evidence="2">
    <location>
        <position position="275"/>
    </location>
    <ligand>
        <name>hypoxanthine</name>
        <dbReference type="ChEBI" id="CHEBI:17368"/>
    </ligand>
</feature>
<organism>
    <name type="scientific">Escherichia coli O157:H7</name>
    <dbReference type="NCBI Taxonomy" id="83334"/>
    <lineage>
        <taxon>Bacteria</taxon>
        <taxon>Pseudomonadati</taxon>
        <taxon>Pseudomonadota</taxon>
        <taxon>Gammaproteobacteria</taxon>
        <taxon>Enterobacterales</taxon>
        <taxon>Enterobacteriaceae</taxon>
        <taxon>Escherichia</taxon>
    </lineage>
</organism>
<dbReference type="EMBL" id="AE005174">
    <property type="protein sequence ID" value="AAG56647.1"/>
    <property type="molecule type" value="Genomic_DNA"/>
</dbReference>
<dbReference type="EMBL" id="BA000007">
    <property type="protein sequence ID" value="BAB35790.1"/>
    <property type="molecule type" value="Genomic_DNA"/>
</dbReference>
<dbReference type="PIR" id="C85773">
    <property type="entry name" value="C85773"/>
</dbReference>
<dbReference type="PIR" id="G90924">
    <property type="entry name" value="G90924"/>
</dbReference>
<dbReference type="RefSeq" id="NP_310394.1">
    <property type="nucleotide sequence ID" value="NC_002695.1"/>
</dbReference>
<dbReference type="RefSeq" id="WP_000190982.1">
    <property type="nucleotide sequence ID" value="NZ_VOAI01000007.1"/>
</dbReference>
<dbReference type="SMR" id="P0ACP8"/>
<dbReference type="STRING" id="155864.Z2681"/>
<dbReference type="GeneID" id="75204504"/>
<dbReference type="GeneID" id="912420"/>
<dbReference type="KEGG" id="ece:Z2681"/>
<dbReference type="KEGG" id="ecs:ECs_2367"/>
<dbReference type="PATRIC" id="fig|386585.9.peg.2479"/>
<dbReference type="eggNOG" id="COG1609">
    <property type="taxonomic scope" value="Bacteria"/>
</dbReference>
<dbReference type="HOGENOM" id="CLU_037628_6_2_6"/>
<dbReference type="OMA" id="ARWVGPP"/>
<dbReference type="UniPathway" id="UPA00488"/>
<dbReference type="Proteomes" id="UP000000558">
    <property type="component" value="Chromosome"/>
</dbReference>
<dbReference type="Proteomes" id="UP000002519">
    <property type="component" value="Chromosome"/>
</dbReference>
<dbReference type="GO" id="GO:0003700">
    <property type="term" value="F:DNA-binding transcription factor activity"/>
    <property type="evidence" value="ECO:0007669"/>
    <property type="project" value="TreeGrafter"/>
</dbReference>
<dbReference type="GO" id="GO:0000976">
    <property type="term" value="F:transcription cis-regulatory region binding"/>
    <property type="evidence" value="ECO:0007669"/>
    <property type="project" value="TreeGrafter"/>
</dbReference>
<dbReference type="GO" id="GO:0045892">
    <property type="term" value="P:negative regulation of DNA-templated transcription"/>
    <property type="evidence" value="ECO:0007669"/>
    <property type="project" value="UniProtKB-UniRule"/>
</dbReference>
<dbReference type="GO" id="GO:0006164">
    <property type="term" value="P:purine nucleotide biosynthetic process"/>
    <property type="evidence" value="ECO:0007669"/>
    <property type="project" value="UniProtKB-UniPathway"/>
</dbReference>
<dbReference type="CDD" id="cd01392">
    <property type="entry name" value="HTH_LacI"/>
    <property type="match status" value="1"/>
</dbReference>
<dbReference type="CDD" id="cd06275">
    <property type="entry name" value="PBP1_PurR"/>
    <property type="match status" value="1"/>
</dbReference>
<dbReference type="FunFam" id="1.10.260.40:FF:000002">
    <property type="entry name" value="HTH-type transcriptional repressor PurR"/>
    <property type="match status" value="1"/>
</dbReference>
<dbReference type="FunFam" id="3.40.50.2300:FF:000045">
    <property type="entry name" value="HTH-type transcriptional repressor PurR"/>
    <property type="match status" value="1"/>
</dbReference>
<dbReference type="Gene3D" id="3.40.50.2300">
    <property type="match status" value="2"/>
</dbReference>
<dbReference type="Gene3D" id="1.10.260.40">
    <property type="entry name" value="lambda repressor-like DNA-binding domains"/>
    <property type="match status" value="1"/>
</dbReference>
<dbReference type="HAMAP" id="MF_01277">
    <property type="entry name" value="HTH_type_PurR"/>
    <property type="match status" value="1"/>
</dbReference>
<dbReference type="InterPro" id="IPR000843">
    <property type="entry name" value="HTH_LacI"/>
</dbReference>
<dbReference type="InterPro" id="IPR046335">
    <property type="entry name" value="LacI/GalR-like_sensor"/>
</dbReference>
<dbReference type="InterPro" id="IPR010982">
    <property type="entry name" value="Lambda_DNA-bd_dom_sf"/>
</dbReference>
<dbReference type="InterPro" id="IPR028082">
    <property type="entry name" value="Peripla_BP_I"/>
</dbReference>
<dbReference type="InterPro" id="IPR023588">
    <property type="entry name" value="Tscrpt_reg_HTH_PurR"/>
</dbReference>
<dbReference type="NCBIfam" id="NF007979">
    <property type="entry name" value="PRK10703.1"/>
    <property type="match status" value="1"/>
</dbReference>
<dbReference type="PANTHER" id="PTHR30146:SF148">
    <property type="entry name" value="HTH-TYPE TRANSCRIPTIONAL REPRESSOR PURR-RELATED"/>
    <property type="match status" value="1"/>
</dbReference>
<dbReference type="PANTHER" id="PTHR30146">
    <property type="entry name" value="LACI-RELATED TRANSCRIPTIONAL REPRESSOR"/>
    <property type="match status" value="1"/>
</dbReference>
<dbReference type="Pfam" id="PF00356">
    <property type="entry name" value="LacI"/>
    <property type="match status" value="1"/>
</dbReference>
<dbReference type="Pfam" id="PF13377">
    <property type="entry name" value="Peripla_BP_3"/>
    <property type="match status" value="1"/>
</dbReference>
<dbReference type="PRINTS" id="PR00036">
    <property type="entry name" value="HTHLACI"/>
</dbReference>
<dbReference type="SMART" id="SM00354">
    <property type="entry name" value="HTH_LACI"/>
    <property type="match status" value="1"/>
</dbReference>
<dbReference type="SUPFAM" id="SSF47413">
    <property type="entry name" value="lambda repressor-like DNA-binding domains"/>
    <property type="match status" value="1"/>
</dbReference>
<dbReference type="SUPFAM" id="SSF53822">
    <property type="entry name" value="Periplasmic binding protein-like I"/>
    <property type="match status" value="1"/>
</dbReference>
<dbReference type="PROSITE" id="PS00356">
    <property type="entry name" value="HTH_LACI_1"/>
    <property type="match status" value="1"/>
</dbReference>
<dbReference type="PROSITE" id="PS50932">
    <property type="entry name" value="HTH_LACI_2"/>
    <property type="match status" value="1"/>
</dbReference>
<evidence type="ECO:0000250" key="1"/>
<evidence type="ECO:0000255" key="2">
    <source>
        <dbReference type="HAMAP-Rule" id="MF_01277"/>
    </source>
</evidence>
<keyword id="KW-0238">DNA-binding</keyword>
<keyword id="KW-0658">Purine biosynthesis</keyword>
<keyword id="KW-1185">Reference proteome</keyword>
<keyword id="KW-0678">Repressor</keyword>
<keyword id="KW-0804">Transcription</keyword>
<keyword id="KW-0805">Transcription regulation</keyword>
<proteinExistence type="inferred from homology"/>